<keyword id="KW-0143">Chaperone</keyword>
<keyword id="KW-1035">Host cytoplasm</keyword>
<keyword id="KW-0597">Phosphoprotein</keyword>
<keyword id="KW-1185">Reference proteome</keyword>
<keyword id="KW-0693">Viral RNA replication</keyword>
<keyword id="KW-1195">Viral transcription</keyword>
<keyword id="KW-0946">Virion</keyword>
<sequence length="313" mass="35251">MNLTQEDEQRLALLRERAAAWDHKNALGEFESNAELDVYNEGIAYPPSIDEMEVGEGRPTLDKILESSIGSDSLPNLEDGPPDQEAAYHEGEMYSTMMTSYMDQDNENMDLSAGPTCSTPQPITGIHHKETINGRVTQMVYIGETSDMALINRLQDEFDVLYNTYPNRNKQGEIVHLIVMWSTPLKPSTRYSLSPAQPPGKKRKIVQHSSNPEPEIVFVPEPTSSEQSLPERQIKAYLQRGIELKGKSAEVPNFKITNETLGFSDANLKLLYPDTSLYPDNPVFILEDVFASTRQLNKIKVNYQLYDPVLPSI</sequence>
<comment type="function">
    <text evidence="1">Essential component of the RNA polymerase transcription and replication complex. Binds the viral ribonucleocapsid and positions the L polymerase on the template. May act as a chaperone for newly synthesized free N protein, so-called N(0). Plays a role in virion assembly.</text>
</comment>
<comment type="subunit">
    <text evidence="1">Homotrimer. This trimer is stabilized by binding to the L protein. Binds N(0), and N in ribonucleocapsid.</text>
</comment>
<comment type="subcellular location">
    <subcellularLocation>
        <location evidence="1">Virion</location>
    </subcellularLocation>
    <subcellularLocation>
        <location evidence="1">Host cytoplasm</location>
    </subcellularLocation>
</comment>
<comment type="PTM">
    <text evidence="1">Phosphorylated by host kinases. Phosphorylation play an important role in facilitating trimerization and possibly P-L complex formation.</text>
</comment>
<reference key="1">
    <citation type="journal article" date="2007" name="Mol. Ecol.">
        <title>The recent spread of a vertically transmitted virus through populations of Drosophila melanogaster.</title>
        <authorList>
            <person name="Carpenter J.A."/>
            <person name="Obbard D.J."/>
            <person name="Maside X."/>
            <person name="Jiggins F.M."/>
        </authorList>
    </citation>
    <scope>NUCLEOTIDE SEQUENCE [GENOMIC RNA]</scope>
    <source>
        <strain>AP30</strain>
    </source>
</reference>
<organism>
    <name type="scientific">Drosophila melanogaster sigma virus (isolate Drosophila/USA/AP30/2005)</name>
    <name type="common">DMelSV</name>
    <dbReference type="NCBI Taxonomy" id="666363"/>
    <lineage>
        <taxon>Viruses</taxon>
        <taxon>Riboviria</taxon>
        <taxon>Orthornavirae</taxon>
        <taxon>Negarnaviricota</taxon>
        <taxon>Haploviricotina</taxon>
        <taxon>Monjiviricetes</taxon>
        <taxon>Mononegavirales</taxon>
        <taxon>Rhabdoviridae</taxon>
        <taxon>Alpharhabdovirinae</taxon>
        <taxon>Sigmavirus</taxon>
        <taxon>Sigmavirus melanogaster</taxon>
    </lineage>
</organism>
<accession>A7WNB2</accession>
<evidence type="ECO:0000250" key="1">
    <source>
        <dbReference type="UniProtKB" id="P03520"/>
    </source>
</evidence>
<evidence type="ECO:0000256" key="2">
    <source>
        <dbReference type="SAM" id="MobiDB-lite"/>
    </source>
</evidence>
<protein>
    <recommendedName>
        <fullName>Phosphoprotein</fullName>
        <shortName>P protein</shortName>
    </recommendedName>
</protein>
<proteinExistence type="inferred from homology"/>
<name>PHOSP_DMSVA</name>
<dbReference type="EMBL" id="AM689309">
    <property type="protein sequence ID" value="CAM82925.3"/>
    <property type="molecule type" value="Genomic_RNA"/>
</dbReference>
<dbReference type="RefSeq" id="YP_003126909.1">
    <property type="nucleotide sequence ID" value="NC_013135.1"/>
</dbReference>
<dbReference type="GeneID" id="8363510"/>
<dbReference type="KEGG" id="vg:8363510"/>
<dbReference type="OrthoDB" id="29715at10239"/>
<dbReference type="Proteomes" id="UP000029768">
    <property type="component" value="Genome"/>
</dbReference>
<dbReference type="GO" id="GO:0030430">
    <property type="term" value="C:host cell cytoplasm"/>
    <property type="evidence" value="ECO:0007669"/>
    <property type="project" value="UniProtKB-SubCell"/>
</dbReference>
<dbReference type="GO" id="GO:0044423">
    <property type="term" value="C:virion component"/>
    <property type="evidence" value="ECO:0007669"/>
    <property type="project" value="UniProtKB-KW"/>
</dbReference>
<dbReference type="GO" id="GO:0019083">
    <property type="term" value="P:viral transcription"/>
    <property type="evidence" value="ECO:0007669"/>
    <property type="project" value="UniProtKB-KW"/>
</dbReference>
<organismHost>
    <name type="scientific">Drosophila melanogaster</name>
    <name type="common">Fruit fly</name>
    <dbReference type="NCBI Taxonomy" id="7227"/>
</organismHost>
<feature type="chain" id="PRO_0000432068" description="Phosphoprotein">
    <location>
        <begin position="1"/>
        <end position="313"/>
    </location>
</feature>
<feature type="region of interest" description="Disordered" evidence="2">
    <location>
        <begin position="189"/>
        <end position="208"/>
    </location>
</feature>
<gene>
    <name type="primary">P</name>
</gene>